<name>P2C57_ARATH</name>
<protein>
    <recommendedName>
        <fullName evidence="7">Protein phosphatase 2C 57</fullName>
        <shortName evidence="7">AtPP2C57</shortName>
        <ecNumber evidence="3">3.1.3.16</ecNumber>
    </recommendedName>
    <alternativeName>
        <fullName evidence="6">Protein phosphatase 2C PPH1</fullName>
        <shortName evidence="6">PP2C PPH1</shortName>
    </alternativeName>
    <alternativeName>
        <fullName evidence="8">Thylakoid-associated phosphatase of 38 kDa</fullName>
    </alternativeName>
</protein>
<evidence type="ECO:0000255" key="1"/>
<evidence type="ECO:0000255" key="2">
    <source>
        <dbReference type="PROSITE-ProRule" id="PRU01082"/>
    </source>
</evidence>
<evidence type="ECO:0000269" key="3">
    <source>
    </source>
</evidence>
<evidence type="ECO:0000269" key="4">
    <source>
    </source>
</evidence>
<evidence type="ECO:0000269" key="5">
    <source>
    </source>
</evidence>
<evidence type="ECO:0000303" key="6">
    <source>
    </source>
</evidence>
<evidence type="ECO:0000303" key="7">
    <source>
    </source>
</evidence>
<evidence type="ECO:0000303" key="8">
    <source>
    </source>
</evidence>
<evidence type="ECO:0000305" key="9"/>
<evidence type="ECO:0000312" key="10">
    <source>
        <dbReference type="Araport" id="AT4G27800"/>
    </source>
</evidence>
<evidence type="ECO:0000312" key="11">
    <source>
        <dbReference type="EMBL" id="CAB43968.1"/>
    </source>
</evidence>
<evidence type="ECO:0007744" key="12">
    <source>
        <dbReference type="PDB" id="4YZG"/>
    </source>
</evidence>
<evidence type="ECO:0007829" key="13">
    <source>
        <dbReference type="PDB" id="4YZG"/>
    </source>
</evidence>
<dbReference type="EC" id="3.1.3.16" evidence="3"/>
<dbReference type="EMBL" id="AL078579">
    <property type="protein sequence ID" value="CAB43968.1"/>
    <property type="status" value="ALT_SEQ"/>
    <property type="molecule type" value="Genomic_DNA"/>
</dbReference>
<dbReference type="EMBL" id="AL161571">
    <property type="protein sequence ID" value="CAB81429.1"/>
    <property type="molecule type" value="Genomic_DNA"/>
</dbReference>
<dbReference type="EMBL" id="CP002687">
    <property type="protein sequence ID" value="AEE85393.1"/>
    <property type="molecule type" value="Genomic_DNA"/>
</dbReference>
<dbReference type="EMBL" id="CP002687">
    <property type="protein sequence ID" value="AEE85394.1"/>
    <property type="molecule type" value="Genomic_DNA"/>
</dbReference>
<dbReference type="EMBL" id="CP002687">
    <property type="protein sequence ID" value="AEE85395.1"/>
    <property type="molecule type" value="Genomic_DNA"/>
</dbReference>
<dbReference type="EMBL" id="AY080875">
    <property type="protein sequence ID" value="AAL87346.1"/>
    <property type="molecule type" value="mRNA"/>
</dbReference>
<dbReference type="EMBL" id="AY114060">
    <property type="protein sequence ID" value="AAM45108.1"/>
    <property type="molecule type" value="mRNA"/>
</dbReference>
<dbReference type="EMBL" id="U34803">
    <property type="protein sequence ID" value="AAA92889.1"/>
    <property type="status" value="ALT_FRAME"/>
    <property type="molecule type" value="mRNA"/>
</dbReference>
<dbReference type="PIR" id="C85323">
    <property type="entry name" value="C85323"/>
</dbReference>
<dbReference type="PIR" id="T09019">
    <property type="entry name" value="T09019"/>
</dbReference>
<dbReference type="RefSeq" id="NP_194509.1">
    <molecule id="P49599-1"/>
    <property type="nucleotide sequence ID" value="NM_118918.5"/>
</dbReference>
<dbReference type="RefSeq" id="NP_849459.1">
    <molecule id="P49599-2"/>
    <property type="nucleotide sequence ID" value="NM_179128.2"/>
</dbReference>
<dbReference type="RefSeq" id="NP_849460.1">
    <molecule id="P49599-3"/>
    <property type="nucleotide sequence ID" value="NM_179129.1"/>
</dbReference>
<dbReference type="PDB" id="4YZG">
    <property type="method" value="X-ray"/>
    <property type="resolution" value="1.60 A"/>
    <property type="chains" value="A/B=59-351"/>
</dbReference>
<dbReference type="PDB" id="4YZH">
    <property type="method" value="X-ray"/>
    <property type="resolution" value="2.00 A"/>
    <property type="chains" value="A=59-351"/>
</dbReference>
<dbReference type="PDBsum" id="4YZG"/>
<dbReference type="PDBsum" id="4YZH"/>
<dbReference type="SMR" id="P49599"/>
<dbReference type="FunCoup" id="P49599">
    <property type="interactions" value="932"/>
</dbReference>
<dbReference type="STRING" id="3702.P49599"/>
<dbReference type="PaxDb" id="3702-AT4G27800.1"/>
<dbReference type="ProteomicsDB" id="248723">
    <molecule id="P49599-1"/>
</dbReference>
<dbReference type="EnsemblPlants" id="AT4G27800.1">
    <molecule id="P49599-1"/>
    <property type="protein sequence ID" value="AT4G27800.1"/>
    <property type="gene ID" value="AT4G27800"/>
</dbReference>
<dbReference type="EnsemblPlants" id="AT4G27800.2">
    <molecule id="P49599-2"/>
    <property type="protein sequence ID" value="AT4G27800.2"/>
    <property type="gene ID" value="AT4G27800"/>
</dbReference>
<dbReference type="EnsemblPlants" id="AT4G27800.3">
    <molecule id="P49599-3"/>
    <property type="protein sequence ID" value="AT4G27800.3"/>
    <property type="gene ID" value="AT4G27800"/>
</dbReference>
<dbReference type="GeneID" id="828893"/>
<dbReference type="Gramene" id="AT4G27800.1">
    <molecule id="P49599-1"/>
    <property type="protein sequence ID" value="AT4G27800.1"/>
    <property type="gene ID" value="AT4G27800"/>
</dbReference>
<dbReference type="Gramene" id="AT4G27800.2">
    <molecule id="P49599-2"/>
    <property type="protein sequence ID" value="AT4G27800.2"/>
    <property type="gene ID" value="AT4G27800"/>
</dbReference>
<dbReference type="Gramene" id="AT4G27800.3">
    <molecule id="P49599-3"/>
    <property type="protein sequence ID" value="AT4G27800.3"/>
    <property type="gene ID" value="AT4G27800"/>
</dbReference>
<dbReference type="KEGG" id="ath:AT4G27800"/>
<dbReference type="Araport" id="AT4G27800"/>
<dbReference type="TAIR" id="AT4G27800">
    <property type="gene designation" value="TAP38"/>
</dbReference>
<dbReference type="eggNOG" id="KOG0698">
    <property type="taxonomic scope" value="Eukaryota"/>
</dbReference>
<dbReference type="HOGENOM" id="CLU_013173_1_0_1"/>
<dbReference type="InParanoid" id="P49599"/>
<dbReference type="OMA" id="WCHASAA"/>
<dbReference type="PhylomeDB" id="P49599"/>
<dbReference type="EvolutionaryTrace" id="P49599"/>
<dbReference type="PRO" id="PR:P49599"/>
<dbReference type="Proteomes" id="UP000006548">
    <property type="component" value="Chromosome 4"/>
</dbReference>
<dbReference type="ExpressionAtlas" id="P49599">
    <property type="expression patterns" value="baseline and differential"/>
</dbReference>
<dbReference type="GO" id="GO:0009507">
    <property type="term" value="C:chloroplast"/>
    <property type="evidence" value="ECO:0007005"/>
    <property type="project" value="TAIR"/>
</dbReference>
<dbReference type="GO" id="GO:0009570">
    <property type="term" value="C:chloroplast stroma"/>
    <property type="evidence" value="ECO:0000314"/>
    <property type="project" value="TAIR"/>
</dbReference>
<dbReference type="GO" id="GO:0005737">
    <property type="term" value="C:cytoplasm"/>
    <property type="evidence" value="ECO:0007005"/>
    <property type="project" value="TAIR"/>
</dbReference>
<dbReference type="GO" id="GO:0016020">
    <property type="term" value="C:membrane"/>
    <property type="evidence" value="ECO:0007669"/>
    <property type="project" value="UniProtKB-SubCell"/>
</dbReference>
<dbReference type="GO" id="GO:0005730">
    <property type="term" value="C:nucleolus"/>
    <property type="evidence" value="ECO:0007005"/>
    <property type="project" value="TAIR"/>
</dbReference>
<dbReference type="GO" id="GO:0005634">
    <property type="term" value="C:nucleus"/>
    <property type="evidence" value="ECO:0007005"/>
    <property type="project" value="TAIR"/>
</dbReference>
<dbReference type="GO" id="GO:0009579">
    <property type="term" value="C:thylakoid"/>
    <property type="evidence" value="ECO:0000314"/>
    <property type="project" value="TAIR"/>
</dbReference>
<dbReference type="GO" id="GO:0000287">
    <property type="term" value="F:magnesium ion binding"/>
    <property type="evidence" value="ECO:0000314"/>
    <property type="project" value="UniProtKB"/>
</dbReference>
<dbReference type="GO" id="GO:0030145">
    <property type="term" value="F:manganese ion binding"/>
    <property type="evidence" value="ECO:0000314"/>
    <property type="project" value="UniProtKB"/>
</dbReference>
<dbReference type="GO" id="GO:0016791">
    <property type="term" value="F:phosphatase activity"/>
    <property type="evidence" value="ECO:0000314"/>
    <property type="project" value="TAIR"/>
</dbReference>
<dbReference type="GO" id="GO:0004722">
    <property type="term" value="F:protein serine/threonine phosphatase activity"/>
    <property type="evidence" value="ECO:0007669"/>
    <property type="project" value="UniProtKB-EC"/>
</dbReference>
<dbReference type="GO" id="GO:0016311">
    <property type="term" value="P:dephosphorylation"/>
    <property type="evidence" value="ECO:0000315"/>
    <property type="project" value="TAIR"/>
</dbReference>
<dbReference type="GO" id="GO:0009767">
    <property type="term" value="P:photosynthetic electron transport chain"/>
    <property type="evidence" value="ECO:0000315"/>
    <property type="project" value="TAIR"/>
</dbReference>
<dbReference type="GO" id="GO:0080005">
    <property type="term" value="P:photosystem stoichiometry adjustment"/>
    <property type="evidence" value="ECO:0000315"/>
    <property type="project" value="TAIR"/>
</dbReference>
<dbReference type="CDD" id="cd00143">
    <property type="entry name" value="PP2Cc"/>
    <property type="match status" value="1"/>
</dbReference>
<dbReference type="FunFam" id="3.60.40.10:FF:000049">
    <property type="entry name" value="Protein phosphatase 2C 57"/>
    <property type="match status" value="1"/>
</dbReference>
<dbReference type="Gene3D" id="3.60.40.10">
    <property type="entry name" value="PPM-type phosphatase domain"/>
    <property type="match status" value="1"/>
</dbReference>
<dbReference type="InterPro" id="IPR015655">
    <property type="entry name" value="PP2C"/>
</dbReference>
<dbReference type="InterPro" id="IPR000222">
    <property type="entry name" value="PP2C_BS"/>
</dbReference>
<dbReference type="InterPro" id="IPR036457">
    <property type="entry name" value="PPM-type-like_dom_sf"/>
</dbReference>
<dbReference type="InterPro" id="IPR001932">
    <property type="entry name" value="PPM-type_phosphatase-like_dom"/>
</dbReference>
<dbReference type="PANTHER" id="PTHR13832:SF589">
    <property type="entry name" value="[PYRUVATE DEHYDROGENASE [ACETYL-TRANSFERRING]]-PHOSPHATASE 2, MITOCHONDRIAL"/>
    <property type="match status" value="1"/>
</dbReference>
<dbReference type="PANTHER" id="PTHR13832">
    <property type="entry name" value="PROTEIN PHOSPHATASE 2C"/>
    <property type="match status" value="1"/>
</dbReference>
<dbReference type="Pfam" id="PF00481">
    <property type="entry name" value="PP2C"/>
    <property type="match status" value="1"/>
</dbReference>
<dbReference type="SMART" id="SM00332">
    <property type="entry name" value="PP2Cc"/>
    <property type="match status" value="1"/>
</dbReference>
<dbReference type="SUPFAM" id="SSF81606">
    <property type="entry name" value="PP2C-like"/>
    <property type="match status" value="1"/>
</dbReference>
<dbReference type="PROSITE" id="PS01032">
    <property type="entry name" value="PPM_1"/>
    <property type="match status" value="1"/>
</dbReference>
<dbReference type="PROSITE" id="PS51746">
    <property type="entry name" value="PPM_2"/>
    <property type="match status" value="1"/>
</dbReference>
<proteinExistence type="evidence at protein level"/>
<comment type="function">
    <molecule>Isoform 2</molecule>
    <text evidence="3 4 9">Protein phosphatase specifically required for efficient dephosphorylation of the light-harvesting complex II outer antennae (LCHII) and transition from state 2 to state 1 (PubMed:20126264, PubMed:20176943). State transition plays a central role in response to environmental changes and allows to adjust to changing light conditions via the redistribution of light excitation energy between photosystem II (PSII) and photosystem I (PSI) in a short time by relocating LHCII proteins (Probable). Mainly responsible for the dephosphorylation of Lhcb1 and Lhcb2 but not of the photosystem II core proteins (PubMed:20176943).</text>
</comment>
<comment type="catalytic activity">
    <reaction evidence="3">
        <text>O-phospho-L-seryl-[protein] + H2O = L-seryl-[protein] + phosphate</text>
        <dbReference type="Rhea" id="RHEA:20629"/>
        <dbReference type="Rhea" id="RHEA-COMP:9863"/>
        <dbReference type="Rhea" id="RHEA-COMP:11604"/>
        <dbReference type="ChEBI" id="CHEBI:15377"/>
        <dbReference type="ChEBI" id="CHEBI:29999"/>
        <dbReference type="ChEBI" id="CHEBI:43474"/>
        <dbReference type="ChEBI" id="CHEBI:83421"/>
        <dbReference type="EC" id="3.1.3.16"/>
    </reaction>
    <physiologicalReaction direction="left-to-right" evidence="3">
        <dbReference type="Rhea" id="RHEA:20630"/>
    </physiologicalReaction>
</comment>
<comment type="catalytic activity">
    <reaction evidence="3">
        <text>O-phospho-L-threonyl-[protein] + H2O = L-threonyl-[protein] + phosphate</text>
        <dbReference type="Rhea" id="RHEA:47004"/>
        <dbReference type="Rhea" id="RHEA-COMP:11060"/>
        <dbReference type="Rhea" id="RHEA-COMP:11605"/>
        <dbReference type="ChEBI" id="CHEBI:15377"/>
        <dbReference type="ChEBI" id="CHEBI:30013"/>
        <dbReference type="ChEBI" id="CHEBI:43474"/>
        <dbReference type="ChEBI" id="CHEBI:61977"/>
        <dbReference type="EC" id="3.1.3.16"/>
    </reaction>
    <physiologicalReaction direction="left-to-right" evidence="3">
        <dbReference type="Rhea" id="RHEA:47005"/>
    </physiologicalReaction>
</comment>
<comment type="cofactor">
    <cofactor evidence="5">
        <name>Mg(2+)</name>
        <dbReference type="ChEBI" id="CHEBI:18420"/>
    </cofactor>
    <cofactor evidence="5">
        <name>Mn(2+)</name>
        <dbReference type="ChEBI" id="CHEBI:29035"/>
    </cofactor>
    <text evidence="5">Binds 2 magnesium or manganese ions per subunit.</text>
</comment>
<comment type="subcellular location">
    <molecule>Isoform 1</molecule>
    <subcellularLocation>
        <location evidence="1">Membrane</location>
        <topology evidence="9">Single-pass membrane protein</topology>
    </subcellularLocation>
</comment>
<comment type="subcellular location">
    <molecule>Isoform 2</molecule>
    <subcellularLocation>
        <location evidence="4">Plastid</location>
        <location evidence="4">Chloroplast stroma</location>
    </subcellularLocation>
    <text evidence="4">Associates with the stroma lamellae of the thylakoid membranes.</text>
</comment>
<comment type="alternative products">
    <event type="alternative splicing"/>
    <isoform>
        <id>P49599-1</id>
        <name>1</name>
        <sequence type="displayed"/>
    </isoform>
    <isoform>
        <id>P49599-2</id>
        <name>2</name>
        <sequence type="described" ref="VSP_034837 VSP_034838"/>
    </isoform>
    <isoform>
        <id>P49599-3</id>
        <name>3</name>
        <sequence type="described" ref="VSP_034835 VSP_034836"/>
    </isoform>
</comment>
<comment type="similarity">
    <text evidence="9">Belongs to the PP2C family.</text>
</comment>
<comment type="sequence caution" evidence="9">
    <conflict type="frameshift">
        <sequence resource="EMBL-CDS" id="AAA92889"/>
    </conflict>
</comment>
<comment type="sequence caution" evidence="9">
    <conflict type="erroneous gene model prediction">
        <sequence resource="EMBL-CDS" id="CAB43968"/>
    </conflict>
</comment>
<reference key="1">
    <citation type="journal article" date="1999" name="Nature">
        <title>Sequence and analysis of chromosome 4 of the plant Arabidopsis thaliana.</title>
        <authorList>
            <person name="Mayer K.F.X."/>
            <person name="Schueller C."/>
            <person name="Wambutt R."/>
            <person name="Murphy G."/>
            <person name="Volckaert G."/>
            <person name="Pohl T."/>
            <person name="Duesterhoeft A."/>
            <person name="Stiekema W."/>
            <person name="Entian K.-D."/>
            <person name="Terryn N."/>
            <person name="Harris B."/>
            <person name="Ansorge W."/>
            <person name="Brandt P."/>
            <person name="Grivell L.A."/>
            <person name="Rieger M."/>
            <person name="Weichselgartner M."/>
            <person name="de Simone V."/>
            <person name="Obermaier B."/>
            <person name="Mache R."/>
            <person name="Mueller M."/>
            <person name="Kreis M."/>
            <person name="Delseny M."/>
            <person name="Puigdomenech P."/>
            <person name="Watson M."/>
            <person name="Schmidtheini T."/>
            <person name="Reichert B."/>
            <person name="Portetelle D."/>
            <person name="Perez-Alonso M."/>
            <person name="Boutry M."/>
            <person name="Bancroft I."/>
            <person name="Vos P."/>
            <person name="Hoheisel J."/>
            <person name="Zimmermann W."/>
            <person name="Wedler H."/>
            <person name="Ridley P."/>
            <person name="Langham S.-A."/>
            <person name="McCullagh B."/>
            <person name="Bilham L."/>
            <person name="Robben J."/>
            <person name="van der Schueren J."/>
            <person name="Grymonprez B."/>
            <person name="Chuang Y.-J."/>
            <person name="Vandenbussche F."/>
            <person name="Braeken M."/>
            <person name="Weltjens I."/>
            <person name="Voet M."/>
            <person name="Bastiaens I."/>
            <person name="Aert R."/>
            <person name="Defoor E."/>
            <person name="Weitzenegger T."/>
            <person name="Bothe G."/>
            <person name="Ramsperger U."/>
            <person name="Hilbert H."/>
            <person name="Braun M."/>
            <person name="Holzer E."/>
            <person name="Brandt A."/>
            <person name="Peters S."/>
            <person name="van Staveren M."/>
            <person name="Dirkse W."/>
            <person name="Mooijman P."/>
            <person name="Klein Lankhorst R."/>
            <person name="Rose M."/>
            <person name="Hauf J."/>
            <person name="Koetter P."/>
            <person name="Berneiser S."/>
            <person name="Hempel S."/>
            <person name="Feldpausch M."/>
            <person name="Lamberth S."/>
            <person name="Van den Daele H."/>
            <person name="De Keyser A."/>
            <person name="Buysshaert C."/>
            <person name="Gielen J."/>
            <person name="Villarroel R."/>
            <person name="De Clercq R."/>
            <person name="van Montagu M."/>
            <person name="Rogers J."/>
            <person name="Cronin A."/>
            <person name="Quail M.A."/>
            <person name="Bray-Allen S."/>
            <person name="Clark L."/>
            <person name="Doggett J."/>
            <person name="Hall S."/>
            <person name="Kay M."/>
            <person name="Lennard N."/>
            <person name="McLay K."/>
            <person name="Mayes R."/>
            <person name="Pettett A."/>
            <person name="Rajandream M.A."/>
            <person name="Lyne M."/>
            <person name="Benes V."/>
            <person name="Rechmann S."/>
            <person name="Borkova D."/>
            <person name="Bloecker H."/>
            <person name="Scharfe M."/>
            <person name="Grimm M."/>
            <person name="Loehnert T.-H."/>
            <person name="Dose S."/>
            <person name="de Haan M."/>
            <person name="Maarse A.C."/>
            <person name="Schaefer M."/>
            <person name="Mueller-Auer S."/>
            <person name="Gabel C."/>
            <person name="Fuchs M."/>
            <person name="Fartmann B."/>
            <person name="Granderath K."/>
            <person name="Dauner D."/>
            <person name="Herzl A."/>
            <person name="Neumann S."/>
            <person name="Argiriou A."/>
            <person name="Vitale D."/>
            <person name="Liguori R."/>
            <person name="Piravandi E."/>
            <person name="Massenet O."/>
            <person name="Quigley F."/>
            <person name="Clabauld G."/>
            <person name="Muendlein A."/>
            <person name="Felber R."/>
            <person name="Schnabl S."/>
            <person name="Hiller R."/>
            <person name="Schmidt W."/>
            <person name="Lecharny A."/>
            <person name="Aubourg S."/>
            <person name="Chefdor F."/>
            <person name="Cooke R."/>
            <person name="Berger C."/>
            <person name="Monfort A."/>
            <person name="Casacuberta E."/>
            <person name="Gibbons T."/>
            <person name="Weber N."/>
            <person name="Vandenbol M."/>
            <person name="Bargues M."/>
            <person name="Terol J."/>
            <person name="Torres A."/>
            <person name="Perez-Perez A."/>
            <person name="Purnelle B."/>
            <person name="Bent E."/>
            <person name="Johnson S."/>
            <person name="Tacon D."/>
            <person name="Jesse T."/>
            <person name="Heijnen L."/>
            <person name="Schwarz S."/>
            <person name="Scholler P."/>
            <person name="Heber S."/>
            <person name="Francs P."/>
            <person name="Bielke C."/>
            <person name="Frishman D."/>
            <person name="Haase D."/>
            <person name="Lemcke K."/>
            <person name="Mewes H.-W."/>
            <person name="Stocker S."/>
            <person name="Zaccaria P."/>
            <person name="Bevan M."/>
            <person name="Wilson R.K."/>
            <person name="de la Bastide M."/>
            <person name="Habermann K."/>
            <person name="Parnell L."/>
            <person name="Dedhia N."/>
            <person name="Gnoj L."/>
            <person name="Schutz K."/>
            <person name="Huang E."/>
            <person name="Spiegel L."/>
            <person name="Sekhon M."/>
            <person name="Murray J."/>
            <person name="Sheet P."/>
            <person name="Cordes M."/>
            <person name="Abu-Threideh J."/>
            <person name="Stoneking T."/>
            <person name="Kalicki J."/>
            <person name="Graves T."/>
            <person name="Harmon G."/>
            <person name="Edwards J."/>
            <person name="Latreille P."/>
            <person name="Courtney L."/>
            <person name="Cloud J."/>
            <person name="Abbott A."/>
            <person name="Scott K."/>
            <person name="Johnson D."/>
            <person name="Minx P."/>
            <person name="Bentley D."/>
            <person name="Fulton B."/>
            <person name="Miller N."/>
            <person name="Greco T."/>
            <person name="Kemp K."/>
            <person name="Kramer J."/>
            <person name="Fulton L."/>
            <person name="Mardis E."/>
            <person name="Dante M."/>
            <person name="Pepin K."/>
            <person name="Hillier L.W."/>
            <person name="Nelson J."/>
            <person name="Spieth J."/>
            <person name="Ryan E."/>
            <person name="Andrews S."/>
            <person name="Geisel C."/>
            <person name="Layman D."/>
            <person name="Du H."/>
            <person name="Ali J."/>
            <person name="Berghoff A."/>
            <person name="Jones K."/>
            <person name="Drone K."/>
            <person name="Cotton M."/>
            <person name="Joshu C."/>
            <person name="Antonoiu B."/>
            <person name="Zidanic M."/>
            <person name="Strong C."/>
            <person name="Sun H."/>
            <person name="Lamar B."/>
            <person name="Yordan C."/>
            <person name="Ma P."/>
            <person name="Zhong J."/>
            <person name="Preston R."/>
            <person name="Vil D."/>
            <person name="Shekher M."/>
            <person name="Matero A."/>
            <person name="Shah R."/>
            <person name="Swaby I.K."/>
            <person name="O'Shaughnessy A."/>
            <person name="Rodriguez M."/>
            <person name="Hoffman J."/>
            <person name="Till S."/>
            <person name="Granat S."/>
            <person name="Shohdy N."/>
            <person name="Hasegawa A."/>
            <person name="Hameed A."/>
            <person name="Lodhi M."/>
            <person name="Johnson A."/>
            <person name="Chen E."/>
            <person name="Marra M.A."/>
            <person name="Martienssen R."/>
            <person name="McCombie W.R."/>
        </authorList>
    </citation>
    <scope>NUCLEOTIDE SEQUENCE [LARGE SCALE GENOMIC DNA]</scope>
    <source>
        <strain>cv. Columbia</strain>
    </source>
</reference>
<reference key="2">
    <citation type="journal article" date="2017" name="Plant J.">
        <title>Araport11: a complete reannotation of the Arabidopsis thaliana reference genome.</title>
        <authorList>
            <person name="Cheng C.Y."/>
            <person name="Krishnakumar V."/>
            <person name="Chan A.P."/>
            <person name="Thibaud-Nissen F."/>
            <person name="Schobel S."/>
            <person name="Town C.D."/>
        </authorList>
    </citation>
    <scope>GENOME REANNOTATION</scope>
    <source>
        <strain>cv. Columbia</strain>
    </source>
</reference>
<reference key="3">
    <citation type="journal article" date="2003" name="Science">
        <title>Empirical analysis of transcriptional activity in the Arabidopsis genome.</title>
        <authorList>
            <person name="Yamada K."/>
            <person name="Lim J."/>
            <person name="Dale J.M."/>
            <person name="Chen H."/>
            <person name="Shinn P."/>
            <person name="Palm C.J."/>
            <person name="Southwick A.M."/>
            <person name="Wu H.C."/>
            <person name="Kim C.J."/>
            <person name="Nguyen M."/>
            <person name="Pham P.K."/>
            <person name="Cheuk R.F."/>
            <person name="Karlin-Newmann G."/>
            <person name="Liu S.X."/>
            <person name="Lam B."/>
            <person name="Sakano H."/>
            <person name="Wu T."/>
            <person name="Yu G."/>
            <person name="Miranda M."/>
            <person name="Quach H.L."/>
            <person name="Tripp M."/>
            <person name="Chang C.H."/>
            <person name="Lee J.M."/>
            <person name="Toriumi M.J."/>
            <person name="Chan M.M."/>
            <person name="Tang C.C."/>
            <person name="Onodera C.S."/>
            <person name="Deng J.M."/>
            <person name="Akiyama K."/>
            <person name="Ansari Y."/>
            <person name="Arakawa T."/>
            <person name="Banh J."/>
            <person name="Banno F."/>
            <person name="Bowser L."/>
            <person name="Brooks S.Y."/>
            <person name="Carninci P."/>
            <person name="Chao Q."/>
            <person name="Choy N."/>
            <person name="Enju A."/>
            <person name="Goldsmith A.D."/>
            <person name="Gurjal M."/>
            <person name="Hansen N.F."/>
            <person name="Hayashizaki Y."/>
            <person name="Johnson-Hopson C."/>
            <person name="Hsuan V.W."/>
            <person name="Iida K."/>
            <person name="Karnes M."/>
            <person name="Khan S."/>
            <person name="Koesema E."/>
            <person name="Ishida J."/>
            <person name="Jiang P.X."/>
            <person name="Jones T."/>
            <person name="Kawai J."/>
            <person name="Kamiya A."/>
            <person name="Meyers C."/>
            <person name="Nakajima M."/>
            <person name="Narusaka M."/>
            <person name="Seki M."/>
            <person name="Sakurai T."/>
            <person name="Satou M."/>
            <person name="Tamse R."/>
            <person name="Vaysberg M."/>
            <person name="Wallender E.K."/>
            <person name="Wong C."/>
            <person name="Yamamura Y."/>
            <person name="Yuan S."/>
            <person name="Shinozaki K."/>
            <person name="Davis R.W."/>
            <person name="Theologis A."/>
            <person name="Ecker J.R."/>
        </authorList>
    </citation>
    <scope>NUCLEOTIDE SEQUENCE [LARGE SCALE MRNA] (ISOFORM 1)</scope>
    <source>
        <strain>cv. Columbia</strain>
    </source>
</reference>
<reference key="4">
    <citation type="journal article" date="1995" name="Science">
        <title>Quantitative monitoring of gene expression patterns with a complementary DNA microarray.</title>
        <authorList>
            <person name="Schena M."/>
            <person name="Shalon D."/>
            <person name="Davis R.W."/>
            <person name="Brown P.O."/>
        </authorList>
    </citation>
    <scope>NUCLEOTIDE SEQUENCE [MRNA] OF 1-365 (ISOFORM 1)</scope>
    <source>
        <strain>cv. Columbia</strain>
    </source>
</reference>
<reference key="5">
    <citation type="journal article" date="2004" name="Trends Plant Sci.">
        <title>Plant PP2C phosphatases: emerging functions in stress signaling.</title>
        <authorList>
            <person name="Schweighofer A."/>
            <person name="Hirt H."/>
            <person name="Meskiene I."/>
        </authorList>
    </citation>
    <scope>GENE FAMILY</scope>
    <scope>NOMENCLATURE</scope>
</reference>
<reference key="6">
    <citation type="journal article" date="2008" name="BMC Genomics">
        <title>Genome-wide and expression analysis of protein phosphatase 2C in rice and Arabidopsis.</title>
        <authorList>
            <person name="Xue T."/>
            <person name="Wang D."/>
            <person name="Zhang S."/>
            <person name="Ehlting J."/>
            <person name="Ni F."/>
            <person name="Jacab S."/>
            <person name="Zheng C."/>
            <person name="Zhong Y."/>
        </authorList>
    </citation>
    <scope>GENE FAMILY</scope>
    <scope>NOMENCLATURE</scope>
</reference>
<reference key="7">
    <citation type="journal article" date="2010" name="PLoS Biol.">
        <title>Role of plastid protein phosphatase TAP38 in LHCII dephosphorylation and thylakoid electron flow.</title>
        <authorList>
            <person name="Pribil M."/>
            <person name="Pesaresi P."/>
            <person name="Hertle A."/>
            <person name="Barbato R."/>
            <person name="Leister D."/>
        </authorList>
    </citation>
    <scope>FUNCTION</scope>
    <scope>CATALYTIC ACTIVITY</scope>
</reference>
<reference key="8">
    <citation type="journal article" date="2010" name="Proc. Natl. Acad. Sci. U.S.A.">
        <title>The PPH1 phosphatase is specifically involved in LHCII dephosphorylation and state transitions in Arabidopsis.</title>
        <authorList>
            <person name="Shapiguzov A."/>
            <person name="Ingelsson B."/>
            <person name="Samol I."/>
            <person name="Andres C."/>
            <person name="Kessler F."/>
            <person name="Rochaix J.D."/>
            <person name="Vener A.V."/>
            <person name="Goldschmidt-Clermont M."/>
        </authorList>
    </citation>
    <scope>FUNCTION</scope>
    <scope>SUBCELLULAR LOCATION</scope>
</reference>
<reference key="9">
    <citation type="journal article" date="2015" name="Plant Cell">
        <title>Structural mechanism underlying the specific recognition between the Arabidopsis state-transition phosphatase TAP38/PPH1 and phosphorylated light-harvesting complex protein Lhcb1.</title>
        <authorList>
            <person name="Wei X."/>
            <person name="Guo J."/>
            <person name="Li M."/>
            <person name="Liu Z."/>
        </authorList>
    </citation>
    <scope>X-RAY CRYSTALLOGRAPHY (1.60 ANGSTROMS) OF 59-351 IN COMPLEX WITH MANGANESE IONS</scope>
</reference>
<accession>P49599</accession>
<accession>Q3E9V3</accession>
<accession>Q3E9V4</accession>
<accession>Q9M0J6</accession>
<accession>Q9STP6</accession>
<feature type="chain" id="PRO_0000057768" description="Protein phosphatase 2C 57">
    <location>
        <begin position="1"/>
        <end position="388"/>
    </location>
</feature>
<feature type="transmembrane region" description="Helical" evidence="1">
    <location>
        <begin position="363"/>
        <end position="383"/>
    </location>
</feature>
<feature type="domain" description="PPM-type phosphatase" evidence="2">
    <location>
        <begin position="59"/>
        <end position="348"/>
    </location>
</feature>
<feature type="binding site" evidence="5 12">
    <location>
        <position position="93"/>
    </location>
    <ligand>
        <name>Mn(2+)</name>
        <dbReference type="ChEBI" id="CHEBI:29035"/>
        <label>1</label>
    </ligand>
</feature>
<feature type="binding site" evidence="5 12">
    <location>
        <position position="93"/>
    </location>
    <ligand>
        <name>Mn(2+)</name>
        <dbReference type="ChEBI" id="CHEBI:29035"/>
        <label>2</label>
    </ligand>
</feature>
<feature type="binding site" evidence="5 12">
    <location>
        <position position="94"/>
    </location>
    <ligand>
        <name>Mn(2+)</name>
        <dbReference type="ChEBI" id="CHEBI:29035"/>
        <label>1</label>
    </ligand>
</feature>
<feature type="binding site" evidence="5 12">
    <location>
        <position position="296"/>
    </location>
    <ligand>
        <name>Mn(2+)</name>
        <dbReference type="ChEBI" id="CHEBI:29035"/>
        <label>2</label>
    </ligand>
</feature>
<feature type="binding site" evidence="5 12">
    <location>
        <position position="339"/>
    </location>
    <ligand>
        <name>Mn(2+)</name>
        <dbReference type="ChEBI" id="CHEBI:29035"/>
        <label>2</label>
    </ligand>
</feature>
<feature type="splice variant" id="VSP_034835" description="In isoform 3." evidence="9">
    <original>LACE</original>
    <variation>ATCL</variation>
    <location>
        <begin position="323"/>
        <end position="326"/>
    </location>
</feature>
<feature type="splice variant" id="VSP_034836" description="In isoform 3." evidence="9">
    <location>
        <begin position="327"/>
        <end position="388"/>
    </location>
</feature>
<feature type="splice variant" id="VSP_034837" description="In isoform 2." evidence="9">
    <original>DR</original>
    <variation>VK</variation>
    <location>
        <begin position="334"/>
        <end position="335"/>
    </location>
</feature>
<feature type="splice variant" id="VSP_034838" description="In isoform 2." evidence="9">
    <location>
        <begin position="336"/>
        <end position="388"/>
    </location>
</feature>
<feature type="sequence conflict" description="In Ref. 4; AAA92889." evidence="9" ref="4">
    <original>MALL</original>
    <variation>SNSS</variation>
    <location>
        <begin position="1"/>
        <end position="4"/>
    </location>
</feature>
<feature type="sequence conflict" description="In Ref. 4; AAA92889." evidence="9" ref="4">
    <original>RD</original>
    <variation>QY</variation>
    <location>
        <begin position="69"/>
        <end position="70"/>
    </location>
</feature>
<feature type="sequence conflict" description="In Ref. 4; AAA92889." evidence="9" ref="4">
    <original>D</original>
    <variation>N</variation>
    <location>
        <position position="271"/>
    </location>
</feature>
<feature type="sequence conflict" description="In Ref. 4; AAA92889." evidence="9" ref="4">
    <original>W</original>
    <variation>C</variation>
    <location>
        <position position="353"/>
    </location>
</feature>
<feature type="strand" evidence="13">
    <location>
        <begin position="59"/>
        <end position="65"/>
    </location>
</feature>
<feature type="strand" evidence="13">
    <location>
        <begin position="69"/>
        <end position="71"/>
    </location>
</feature>
<feature type="strand" evidence="13">
    <location>
        <begin position="74"/>
        <end position="81"/>
    </location>
</feature>
<feature type="turn" evidence="13">
    <location>
        <begin position="82"/>
        <end position="85"/>
    </location>
</feature>
<feature type="strand" evidence="13">
    <location>
        <begin position="86"/>
        <end position="98"/>
    </location>
</feature>
<feature type="helix" evidence="13">
    <location>
        <begin position="99"/>
        <end position="115"/>
    </location>
</feature>
<feature type="helix" evidence="13">
    <location>
        <begin position="119"/>
        <end position="123"/>
    </location>
</feature>
<feature type="helix" evidence="13">
    <location>
        <begin position="127"/>
        <end position="151"/>
    </location>
</feature>
<feature type="strand" evidence="13">
    <location>
        <begin position="160"/>
        <end position="169"/>
    </location>
</feature>
<feature type="strand" evidence="13">
    <location>
        <begin position="172"/>
        <end position="180"/>
    </location>
</feature>
<feature type="strand" evidence="13">
    <location>
        <begin position="182"/>
        <end position="187"/>
    </location>
</feature>
<feature type="strand" evidence="13">
    <location>
        <begin position="190"/>
        <end position="193"/>
    </location>
</feature>
<feature type="strand" evidence="13">
    <location>
        <begin position="202"/>
        <end position="204"/>
    </location>
</feature>
<feature type="helix" evidence="13">
    <location>
        <begin position="205"/>
        <end position="216"/>
    </location>
</feature>
<feature type="turn" evidence="13">
    <location>
        <begin position="227"/>
        <end position="229"/>
    </location>
</feature>
<feature type="helix" evidence="13">
    <location>
        <begin position="239"/>
        <end position="241"/>
    </location>
</feature>
<feature type="turn" evidence="13">
    <location>
        <begin position="242"/>
        <end position="244"/>
    </location>
</feature>
<feature type="helix" evidence="13">
    <location>
        <begin position="245"/>
        <end position="254"/>
    </location>
</feature>
<feature type="helix" evidence="13">
    <location>
        <begin position="260"/>
        <end position="264"/>
    </location>
</feature>
<feature type="strand" evidence="13">
    <location>
        <begin position="272"/>
        <end position="274"/>
    </location>
</feature>
<feature type="strand" evidence="13">
    <location>
        <begin position="278"/>
        <end position="283"/>
    </location>
</feature>
<feature type="strand" evidence="13">
    <location>
        <begin position="288"/>
        <end position="294"/>
    </location>
</feature>
<feature type="helix" evidence="13">
    <location>
        <begin position="296"/>
        <end position="299"/>
    </location>
</feature>
<feature type="helix" evidence="13">
    <location>
        <begin position="304"/>
        <end position="318"/>
    </location>
</feature>
<feature type="helix" evidence="13">
    <location>
        <begin position="321"/>
        <end position="334"/>
    </location>
</feature>
<feature type="strand" evidence="13">
    <location>
        <begin position="341"/>
        <end position="347"/>
    </location>
</feature>
<gene>
    <name evidence="6" type="primary">PPH1</name>
    <name evidence="7" type="synonym">PP2C57</name>
    <name evidence="8" type="synonym">TAP38</name>
    <name evidence="10" type="ordered locus">At4g27800</name>
    <name evidence="11" type="ORF">T27E11.40</name>
</gene>
<organism>
    <name type="scientific">Arabidopsis thaliana</name>
    <name type="common">Mouse-ear cress</name>
    <dbReference type="NCBI Taxonomy" id="3702"/>
    <lineage>
        <taxon>Eukaryota</taxon>
        <taxon>Viridiplantae</taxon>
        <taxon>Streptophyta</taxon>
        <taxon>Embryophyta</taxon>
        <taxon>Tracheophyta</taxon>
        <taxon>Spermatophyta</taxon>
        <taxon>Magnoliopsida</taxon>
        <taxon>eudicotyledons</taxon>
        <taxon>Gunneridae</taxon>
        <taxon>Pentapetalae</taxon>
        <taxon>rosids</taxon>
        <taxon>malvids</taxon>
        <taxon>Brassicales</taxon>
        <taxon>Brassicaceae</taxon>
        <taxon>Camelineae</taxon>
        <taxon>Arabidopsis</taxon>
    </lineage>
</organism>
<keyword id="KW-0002">3D-structure</keyword>
<keyword id="KW-0025">Alternative splicing</keyword>
<keyword id="KW-0150">Chloroplast</keyword>
<keyword id="KW-0378">Hydrolase</keyword>
<keyword id="KW-0460">Magnesium</keyword>
<keyword id="KW-0464">Manganese</keyword>
<keyword id="KW-0472">Membrane</keyword>
<keyword id="KW-0479">Metal-binding</keyword>
<keyword id="KW-0934">Plastid</keyword>
<keyword id="KW-0904">Protein phosphatase</keyword>
<keyword id="KW-1185">Reference proteome</keyword>
<keyword id="KW-0812">Transmembrane</keyword>
<keyword id="KW-1133">Transmembrane helix</keyword>
<sequence length="388" mass="42719">MALLRPHLHRFHSNTLRHSAYPSADAGGGLVVYPTYGRHRCSAIAIDAPSSLTGVTPIRWGYTSVQGFRDEMEDDIVIRSDAVDSFSYAAVFDGHAGSSSVKFLREELYKECVGALQAGSLLNGGDFAAIKEALIKAFESVDRNLLKWLEANGDEEDESGSTATVMIIRNDVSFIAHIGDSCAVLSRSGQIEELTDYHRPYGSSRAAIQEVKRVKEAGGWIVNGRICGDIAVSRAFGDIRFKTKKNDMLKKGVDEGRWSEKFVSRIEFKGDMVVATPDIFQVPLTSDVEFIILASDGLWDYMKSSDVVSYVRDQLRKHGNVQLACESLAQVALDRRSQDNISIIIADLGRTEWKNLPAQRQNVVVELVQAATTIGLVTVGIWMSSHLS</sequence>